<gene>
    <name evidence="1" type="primary">purM</name>
    <name type="ordered locus">Dalk_0709</name>
</gene>
<keyword id="KW-0067">ATP-binding</keyword>
<keyword id="KW-0963">Cytoplasm</keyword>
<keyword id="KW-0436">Ligase</keyword>
<keyword id="KW-0547">Nucleotide-binding</keyword>
<keyword id="KW-0658">Purine biosynthesis</keyword>
<keyword id="KW-1185">Reference proteome</keyword>
<proteinExistence type="inferred from homology"/>
<organism>
    <name type="scientific">Desulfatibacillum aliphaticivorans</name>
    <dbReference type="NCBI Taxonomy" id="218208"/>
    <lineage>
        <taxon>Bacteria</taxon>
        <taxon>Pseudomonadati</taxon>
        <taxon>Thermodesulfobacteriota</taxon>
        <taxon>Desulfobacteria</taxon>
        <taxon>Desulfobacterales</taxon>
        <taxon>Desulfatibacillaceae</taxon>
        <taxon>Desulfatibacillum</taxon>
    </lineage>
</organism>
<dbReference type="EC" id="6.3.3.1" evidence="1"/>
<dbReference type="EMBL" id="CP001322">
    <property type="protein sequence ID" value="ACL02414.1"/>
    <property type="molecule type" value="Genomic_DNA"/>
</dbReference>
<dbReference type="RefSeq" id="WP_012609853.1">
    <property type="nucleotide sequence ID" value="NC_011768.1"/>
</dbReference>
<dbReference type="SMR" id="B8FJY6"/>
<dbReference type="KEGG" id="dal:Dalk_0709"/>
<dbReference type="eggNOG" id="COG0150">
    <property type="taxonomic scope" value="Bacteria"/>
</dbReference>
<dbReference type="HOGENOM" id="CLU_047116_0_0_7"/>
<dbReference type="UniPathway" id="UPA00074">
    <property type="reaction ID" value="UER00129"/>
</dbReference>
<dbReference type="Proteomes" id="UP000000739">
    <property type="component" value="Chromosome"/>
</dbReference>
<dbReference type="GO" id="GO:0005829">
    <property type="term" value="C:cytosol"/>
    <property type="evidence" value="ECO:0007669"/>
    <property type="project" value="TreeGrafter"/>
</dbReference>
<dbReference type="GO" id="GO:0005524">
    <property type="term" value="F:ATP binding"/>
    <property type="evidence" value="ECO:0007669"/>
    <property type="project" value="UniProtKB-KW"/>
</dbReference>
<dbReference type="GO" id="GO:0004637">
    <property type="term" value="F:phosphoribosylamine-glycine ligase activity"/>
    <property type="evidence" value="ECO:0007669"/>
    <property type="project" value="TreeGrafter"/>
</dbReference>
<dbReference type="GO" id="GO:0004641">
    <property type="term" value="F:phosphoribosylformylglycinamidine cyclo-ligase activity"/>
    <property type="evidence" value="ECO:0007669"/>
    <property type="project" value="UniProtKB-UniRule"/>
</dbReference>
<dbReference type="GO" id="GO:0006189">
    <property type="term" value="P:'de novo' IMP biosynthetic process"/>
    <property type="evidence" value="ECO:0007669"/>
    <property type="project" value="UniProtKB-UniRule"/>
</dbReference>
<dbReference type="GO" id="GO:0046084">
    <property type="term" value="P:adenine biosynthetic process"/>
    <property type="evidence" value="ECO:0007669"/>
    <property type="project" value="TreeGrafter"/>
</dbReference>
<dbReference type="CDD" id="cd02196">
    <property type="entry name" value="PurM"/>
    <property type="match status" value="1"/>
</dbReference>
<dbReference type="FunFam" id="3.30.1330.10:FF:000001">
    <property type="entry name" value="Phosphoribosylformylglycinamidine cyclo-ligase"/>
    <property type="match status" value="1"/>
</dbReference>
<dbReference type="FunFam" id="3.90.650.10:FF:000011">
    <property type="entry name" value="Phosphoribosylformylglycinamidine cyclo-ligase"/>
    <property type="match status" value="1"/>
</dbReference>
<dbReference type="Gene3D" id="3.90.650.10">
    <property type="entry name" value="PurM-like C-terminal domain"/>
    <property type="match status" value="1"/>
</dbReference>
<dbReference type="Gene3D" id="3.30.1330.10">
    <property type="entry name" value="PurM-like, N-terminal domain"/>
    <property type="match status" value="1"/>
</dbReference>
<dbReference type="HAMAP" id="MF_00741">
    <property type="entry name" value="AIRS"/>
    <property type="match status" value="1"/>
</dbReference>
<dbReference type="InterPro" id="IPR010918">
    <property type="entry name" value="PurM-like_C_dom"/>
</dbReference>
<dbReference type="InterPro" id="IPR036676">
    <property type="entry name" value="PurM-like_C_sf"/>
</dbReference>
<dbReference type="InterPro" id="IPR016188">
    <property type="entry name" value="PurM-like_N"/>
</dbReference>
<dbReference type="InterPro" id="IPR036921">
    <property type="entry name" value="PurM-like_N_sf"/>
</dbReference>
<dbReference type="InterPro" id="IPR004733">
    <property type="entry name" value="PurM_cligase"/>
</dbReference>
<dbReference type="NCBIfam" id="TIGR00878">
    <property type="entry name" value="purM"/>
    <property type="match status" value="1"/>
</dbReference>
<dbReference type="PANTHER" id="PTHR10520:SF12">
    <property type="entry name" value="TRIFUNCTIONAL PURINE BIOSYNTHETIC PROTEIN ADENOSINE-3"/>
    <property type="match status" value="1"/>
</dbReference>
<dbReference type="PANTHER" id="PTHR10520">
    <property type="entry name" value="TRIFUNCTIONAL PURINE BIOSYNTHETIC PROTEIN ADENOSINE-3-RELATED"/>
    <property type="match status" value="1"/>
</dbReference>
<dbReference type="Pfam" id="PF00586">
    <property type="entry name" value="AIRS"/>
    <property type="match status" value="1"/>
</dbReference>
<dbReference type="Pfam" id="PF02769">
    <property type="entry name" value="AIRS_C"/>
    <property type="match status" value="1"/>
</dbReference>
<dbReference type="SUPFAM" id="SSF56042">
    <property type="entry name" value="PurM C-terminal domain-like"/>
    <property type="match status" value="1"/>
</dbReference>
<dbReference type="SUPFAM" id="SSF55326">
    <property type="entry name" value="PurM N-terminal domain-like"/>
    <property type="match status" value="1"/>
</dbReference>
<reference key="1">
    <citation type="journal article" date="2012" name="Environ. Microbiol.">
        <title>The genome sequence of Desulfatibacillum alkenivorans AK-01: a blueprint for anaerobic alkane oxidation.</title>
        <authorList>
            <person name="Callaghan A.V."/>
            <person name="Morris B.E."/>
            <person name="Pereira I.A."/>
            <person name="McInerney M.J."/>
            <person name="Austin R.N."/>
            <person name="Groves J.T."/>
            <person name="Kukor J.J."/>
            <person name="Suflita J.M."/>
            <person name="Young L.Y."/>
            <person name="Zylstra G.J."/>
            <person name="Wawrik B."/>
        </authorList>
    </citation>
    <scope>NUCLEOTIDE SEQUENCE [LARGE SCALE GENOMIC DNA]</scope>
    <source>
        <strain>AK-01</strain>
    </source>
</reference>
<accession>B8FJY6</accession>
<comment type="catalytic activity">
    <reaction evidence="1">
        <text>2-formamido-N(1)-(5-O-phospho-beta-D-ribosyl)acetamidine + ATP = 5-amino-1-(5-phospho-beta-D-ribosyl)imidazole + ADP + phosphate + H(+)</text>
        <dbReference type="Rhea" id="RHEA:23032"/>
        <dbReference type="ChEBI" id="CHEBI:15378"/>
        <dbReference type="ChEBI" id="CHEBI:30616"/>
        <dbReference type="ChEBI" id="CHEBI:43474"/>
        <dbReference type="ChEBI" id="CHEBI:137981"/>
        <dbReference type="ChEBI" id="CHEBI:147287"/>
        <dbReference type="ChEBI" id="CHEBI:456216"/>
        <dbReference type="EC" id="6.3.3.1"/>
    </reaction>
</comment>
<comment type="pathway">
    <text evidence="1">Purine metabolism; IMP biosynthesis via de novo pathway; 5-amino-1-(5-phospho-D-ribosyl)imidazole from N(2)-formyl-N(1)-(5-phospho-D-ribosyl)glycinamide: step 2/2.</text>
</comment>
<comment type="subcellular location">
    <subcellularLocation>
        <location evidence="1">Cytoplasm</location>
    </subcellularLocation>
</comment>
<comment type="similarity">
    <text evidence="1">Belongs to the AIR synthase family.</text>
</comment>
<protein>
    <recommendedName>
        <fullName evidence="1">Phosphoribosylformylglycinamidine cyclo-ligase</fullName>
        <ecNumber evidence="1">6.3.3.1</ecNumber>
    </recommendedName>
    <alternativeName>
        <fullName evidence="1">AIR synthase</fullName>
    </alternativeName>
    <alternativeName>
        <fullName evidence="1">AIRS</fullName>
    </alternativeName>
    <alternativeName>
        <fullName evidence="1">Phosphoribosyl-aminoimidazole synthetase</fullName>
    </alternativeName>
</protein>
<evidence type="ECO:0000255" key="1">
    <source>
        <dbReference type="HAMAP-Rule" id="MF_00741"/>
    </source>
</evidence>
<sequence>MAKSLSYADAGVDIDKANRLVDRIKTIVKSTPRQGVIGGIGGFGGLFSLNTEQYERPVLVSSTDGVGTKLRVAIMMDKHDTIGIDLVAMSVNDILVQGAKPLFFLDYLSMGKLNENTAADIIEGVAEGCRQANCALIGGETAEMPGMYEDGDYDLAGFAVGIADNFKIVDGSDVGQGNVLLGIASTGLHSNGYSLARKVFFDHLGLKVDSYVEDLGMTVGEAMLEPTKIYAEIVRNLIRDIHVNGMAHITGGGIIDNLPRTIPQSCKAIIREGSWEYPAIFPFMKKAGDIDEMEMMRTFNNGIGLVAVIPEPQVQEALELMQAMGEKAYVIGEIAARGENDDRIEWK</sequence>
<feature type="chain" id="PRO_1000148277" description="Phosphoribosylformylglycinamidine cyclo-ligase">
    <location>
        <begin position="1"/>
        <end position="347"/>
    </location>
</feature>
<name>PUR5_DESAL</name>